<proteinExistence type="inferred from homology"/>
<protein>
    <recommendedName>
        <fullName evidence="1">3-dehydroquinate synthase</fullName>
        <shortName evidence="1">DHQ synthase</shortName>
        <ecNumber evidence="1">1.4.1.24</ecNumber>
    </recommendedName>
    <alternativeName>
        <fullName evidence="1">3-dehydroquinate synthase II</fullName>
    </alternativeName>
</protein>
<accession>A9A235</accession>
<keyword id="KW-0028">Amino-acid biosynthesis</keyword>
<keyword id="KW-0057">Aromatic amino acid biosynthesis</keyword>
<keyword id="KW-0520">NAD</keyword>
<keyword id="KW-0560">Oxidoreductase</keyword>
<keyword id="KW-1185">Reference proteome</keyword>
<comment type="function">
    <text evidence="1">Catalyzes the oxidative deamination and cyclization of 2-amino-3,7-dideoxy-D-threo-hept-6-ulosonic acid (ADH) to yield 3-dehydroquinate (DHQ), which is fed into the canonical shikimic pathway of aromatic amino acid biosynthesis.</text>
</comment>
<comment type="catalytic activity">
    <reaction evidence="1">
        <text>2-amino-2,3,7-trideoxy-D-lyxo-hept-6-ulosonate + NAD(+) + H2O = 3-dehydroquinate + NH4(+) + NADH + H(+)</text>
        <dbReference type="Rhea" id="RHEA:25956"/>
        <dbReference type="ChEBI" id="CHEBI:15377"/>
        <dbReference type="ChEBI" id="CHEBI:15378"/>
        <dbReference type="ChEBI" id="CHEBI:28938"/>
        <dbReference type="ChEBI" id="CHEBI:32364"/>
        <dbReference type="ChEBI" id="CHEBI:57540"/>
        <dbReference type="ChEBI" id="CHEBI:57945"/>
        <dbReference type="ChEBI" id="CHEBI:58859"/>
        <dbReference type="EC" id="1.4.1.24"/>
    </reaction>
</comment>
<comment type="similarity">
    <text evidence="1">Belongs to the archaeal-type DHQ synthase family.</text>
</comment>
<evidence type="ECO:0000255" key="1">
    <source>
        <dbReference type="HAMAP-Rule" id="MF_01244"/>
    </source>
</evidence>
<reference key="1">
    <citation type="journal article" date="2010" name="Proc. Natl. Acad. Sci. U.S.A.">
        <title>Nitrosopumilus maritimus genome reveals unique mechanisms for nitrification and autotrophy in globally distributed marine crenarchaea.</title>
        <authorList>
            <person name="Walker C.B."/>
            <person name="de la Torre J.R."/>
            <person name="Klotz M.G."/>
            <person name="Urakawa H."/>
            <person name="Pinel N."/>
            <person name="Arp D.J."/>
            <person name="Brochier-Armanet C."/>
            <person name="Chain P.S."/>
            <person name="Chan P.P."/>
            <person name="Gollabgir A."/>
            <person name="Hemp J."/>
            <person name="Hugler M."/>
            <person name="Karr E.A."/>
            <person name="Konneke M."/>
            <person name="Shin M."/>
            <person name="Lawton T.J."/>
            <person name="Lowe T."/>
            <person name="Martens-Habbena W."/>
            <person name="Sayavedra-Soto L.A."/>
            <person name="Lang D."/>
            <person name="Sievert S.M."/>
            <person name="Rosenzweig A.C."/>
            <person name="Manning G."/>
            <person name="Stahl D.A."/>
        </authorList>
    </citation>
    <scope>NUCLEOTIDE SEQUENCE [LARGE SCALE GENOMIC DNA]</scope>
    <source>
        <strain>SCM1</strain>
    </source>
</reference>
<organism>
    <name type="scientific">Nitrosopumilus maritimus (strain SCM1)</name>
    <dbReference type="NCBI Taxonomy" id="436308"/>
    <lineage>
        <taxon>Archaea</taxon>
        <taxon>Nitrososphaerota</taxon>
        <taxon>Nitrososphaeria</taxon>
        <taxon>Nitrosopumilales</taxon>
        <taxon>Nitrosopumilaceae</taxon>
        <taxon>Nitrosopumilus</taxon>
    </lineage>
</organism>
<dbReference type="EC" id="1.4.1.24" evidence="1"/>
<dbReference type="EMBL" id="CP000866">
    <property type="protein sequence ID" value="ABX12448.1"/>
    <property type="molecule type" value="Genomic_DNA"/>
</dbReference>
<dbReference type="RefSeq" id="WP_012214935.1">
    <property type="nucleotide sequence ID" value="NC_010085.1"/>
</dbReference>
<dbReference type="STRING" id="436308.Nmar_0552"/>
<dbReference type="EnsemblBacteria" id="ABX12448">
    <property type="protein sequence ID" value="ABX12448"/>
    <property type="gene ID" value="Nmar_0552"/>
</dbReference>
<dbReference type="GeneID" id="5773334"/>
<dbReference type="KEGG" id="nmr:Nmar_0552"/>
<dbReference type="eggNOG" id="arCOG04353">
    <property type="taxonomic scope" value="Archaea"/>
</dbReference>
<dbReference type="HOGENOM" id="CLU_056379_0_0_2"/>
<dbReference type="InParanoid" id="A9A235"/>
<dbReference type="OrthoDB" id="10265at2157"/>
<dbReference type="PhylomeDB" id="A9A235"/>
<dbReference type="Proteomes" id="UP000000792">
    <property type="component" value="Chromosome"/>
</dbReference>
<dbReference type="GO" id="GO:0003856">
    <property type="term" value="F:3-dehydroquinate synthase activity"/>
    <property type="evidence" value="ECO:0007669"/>
    <property type="project" value="InterPro"/>
</dbReference>
<dbReference type="GO" id="GO:0102042">
    <property type="term" value="F:dehydroquinate synthase activity"/>
    <property type="evidence" value="ECO:0007669"/>
    <property type="project" value="UniProtKB-EC"/>
</dbReference>
<dbReference type="GO" id="GO:0051287">
    <property type="term" value="F:NAD binding"/>
    <property type="evidence" value="ECO:0007669"/>
    <property type="project" value="UniProtKB-UniRule"/>
</dbReference>
<dbReference type="GO" id="GO:0008652">
    <property type="term" value="P:amino acid biosynthetic process"/>
    <property type="evidence" value="ECO:0007669"/>
    <property type="project" value="UniProtKB-KW"/>
</dbReference>
<dbReference type="GO" id="GO:0009073">
    <property type="term" value="P:aromatic amino acid family biosynthetic process"/>
    <property type="evidence" value="ECO:0007669"/>
    <property type="project" value="UniProtKB-UniRule"/>
</dbReference>
<dbReference type="HAMAP" id="MF_01244">
    <property type="entry name" value="Arch_DHQ_synthase"/>
    <property type="match status" value="1"/>
</dbReference>
<dbReference type="InterPro" id="IPR002812">
    <property type="entry name" value="DHQ_synth"/>
</dbReference>
<dbReference type="PANTHER" id="PTHR33563">
    <property type="match status" value="1"/>
</dbReference>
<dbReference type="PANTHER" id="PTHR33563:SF1">
    <property type="entry name" value="3-DEHYDROQUINATE SYNTHASE"/>
    <property type="match status" value="1"/>
</dbReference>
<dbReference type="Pfam" id="PF01959">
    <property type="entry name" value="DHQS"/>
    <property type="match status" value="1"/>
</dbReference>
<dbReference type="PIRSF" id="PIRSF006655">
    <property type="entry name" value="DHQ_synth"/>
    <property type="match status" value="1"/>
</dbReference>
<sequence>MSKSRELIIAPKGSQAQLSKLLPQLEDEGIKMIYLDPKKLGKKKTKLQTVYPSNNANYVVLEKENATKPKGKKVGRKFEVLSNTDIENILTIAKKGLDFVVVEVKDWKIIPLENIIAKLHKIHTKIFAVARTPEEVRKMFSILEVGVDGVIFNTSSINEVREAMVYLGTRSFDMKPAKIIDIKEVGDGERVCVDTASMLHKGEGMLIGSRSNFLFLVHNESVGSSFTSPRPFRVNAGAVHCYTLSPDGTTNYLSEVETGSEVLILNSKGKARRATVGRSKIERRPMLMIKAKAGGEIGGIIAQDAETIRFVKPNGQLVSVTHLKKGDTVMVHSKPATGRHFGMEVSDEYILEK</sequence>
<gene>
    <name evidence="1" type="primary">aroB'</name>
    <name type="ordered locus">Nmar_0552</name>
</gene>
<feature type="chain" id="PRO_0000372056" description="3-dehydroquinate synthase">
    <location>
        <begin position="1"/>
        <end position="353"/>
    </location>
</feature>
<name>DHQS_NITMS</name>